<reference key="1">
    <citation type="journal article" date="2003" name="Nature">
        <title>Unique physiological and pathogenic features of Leptospira interrogans revealed by whole-genome sequencing.</title>
        <authorList>
            <person name="Ren S.-X."/>
            <person name="Fu G."/>
            <person name="Jiang X.-G."/>
            <person name="Zeng R."/>
            <person name="Miao Y.-G."/>
            <person name="Xu H."/>
            <person name="Zhang Y.-X."/>
            <person name="Xiong H."/>
            <person name="Lu G."/>
            <person name="Lu L.-F."/>
            <person name="Jiang H.-Q."/>
            <person name="Jia J."/>
            <person name="Tu Y.-F."/>
            <person name="Jiang J.-X."/>
            <person name="Gu W.-Y."/>
            <person name="Zhang Y.-Q."/>
            <person name="Cai Z."/>
            <person name="Sheng H.-H."/>
            <person name="Yin H.-F."/>
            <person name="Zhang Y."/>
            <person name="Zhu G.-F."/>
            <person name="Wan M."/>
            <person name="Huang H.-L."/>
            <person name="Qian Z."/>
            <person name="Wang S.-Y."/>
            <person name="Ma W."/>
            <person name="Yao Z.-J."/>
            <person name="Shen Y."/>
            <person name="Qiang B.-Q."/>
            <person name="Xia Q.-C."/>
            <person name="Guo X.-K."/>
            <person name="Danchin A."/>
            <person name="Saint Girons I."/>
            <person name="Somerville R.L."/>
            <person name="Wen Y.-M."/>
            <person name="Shi M.-H."/>
            <person name="Chen Z."/>
            <person name="Xu J.-G."/>
            <person name="Zhao G.-P."/>
        </authorList>
    </citation>
    <scope>NUCLEOTIDE SEQUENCE [LARGE SCALE GENOMIC DNA]</scope>
    <source>
        <strain>56601</strain>
    </source>
</reference>
<organism>
    <name type="scientific">Leptospira interrogans serogroup Icterohaemorrhagiae serovar Lai (strain 56601)</name>
    <dbReference type="NCBI Taxonomy" id="189518"/>
    <lineage>
        <taxon>Bacteria</taxon>
        <taxon>Pseudomonadati</taxon>
        <taxon>Spirochaetota</taxon>
        <taxon>Spirochaetia</taxon>
        <taxon>Leptospirales</taxon>
        <taxon>Leptospiraceae</taxon>
        <taxon>Leptospira</taxon>
    </lineage>
</organism>
<proteinExistence type="inferred from homology"/>
<keyword id="KW-0028">Amino-acid biosynthesis</keyword>
<keyword id="KW-0963">Cytoplasm</keyword>
<keyword id="KW-0315">Glutamine amidotransferase</keyword>
<keyword id="KW-0368">Histidine biosynthesis</keyword>
<keyword id="KW-0378">Hydrolase</keyword>
<keyword id="KW-0456">Lyase</keyword>
<keyword id="KW-1185">Reference proteome</keyword>
<name>HIS5_LEPIN</name>
<protein>
    <recommendedName>
        <fullName>Imidazole glycerol phosphate synthase subunit HisH</fullName>
        <ecNumber>4.3.2.10</ecNumber>
    </recommendedName>
    <alternativeName>
        <fullName>IGP synthase glutaminase subunit</fullName>
        <ecNumber>3.5.1.2</ecNumber>
    </alternativeName>
    <alternativeName>
        <fullName>IGP synthase subunit HisH</fullName>
    </alternativeName>
    <alternativeName>
        <fullName>ImGP synthase subunit HisH</fullName>
        <shortName>IGPS subunit HisH</shortName>
    </alternativeName>
</protein>
<evidence type="ECO:0000250" key="1"/>
<sequence>MIAILDYGMGNIHSCLKAVSLYTKDFVFTKDHSTIENSKALILPGDGHFDKAMENLNSTGLRKTIDKHVTSGKPLFGICIGFQILFESSEEIAQGSKKEQIEGLGYIKGKIKKFHGKDFKVPHIGWNRLQIRRKDKSVLLKGIGDQSFFYFIHSYRPTDAEGNAITGLCDYYQEKFPAVVEKNNIFGTQFHPEKSHTHGLKLLENFIRFI</sequence>
<dbReference type="EC" id="4.3.2.10"/>
<dbReference type="EC" id="3.5.1.2"/>
<dbReference type="EMBL" id="AE010300">
    <property type="protein sequence ID" value="AAN47324.1"/>
    <property type="molecule type" value="Genomic_DNA"/>
</dbReference>
<dbReference type="RefSeq" id="NP_710306.1">
    <property type="nucleotide sequence ID" value="NC_004342.2"/>
</dbReference>
<dbReference type="RefSeq" id="WP_000560473.1">
    <property type="nucleotide sequence ID" value="NC_004342.2"/>
</dbReference>
<dbReference type="SMR" id="P59118"/>
<dbReference type="FunCoup" id="P59118">
    <property type="interactions" value="266"/>
</dbReference>
<dbReference type="STRING" id="189518.LA_0125"/>
<dbReference type="PaxDb" id="189518-LA_0125"/>
<dbReference type="EnsemblBacteria" id="AAN47324">
    <property type="protein sequence ID" value="AAN47324"/>
    <property type="gene ID" value="LA_0125"/>
</dbReference>
<dbReference type="GeneID" id="61143468"/>
<dbReference type="KEGG" id="lil:LA_0125"/>
<dbReference type="PATRIC" id="fig|189518.3.peg.128"/>
<dbReference type="HOGENOM" id="CLU_071837_2_2_12"/>
<dbReference type="InParanoid" id="P59118"/>
<dbReference type="OrthoDB" id="9807137at2"/>
<dbReference type="UniPathway" id="UPA00031">
    <property type="reaction ID" value="UER00010"/>
</dbReference>
<dbReference type="Proteomes" id="UP000001408">
    <property type="component" value="Chromosome I"/>
</dbReference>
<dbReference type="GO" id="GO:0005737">
    <property type="term" value="C:cytoplasm"/>
    <property type="evidence" value="ECO:0007669"/>
    <property type="project" value="UniProtKB-SubCell"/>
</dbReference>
<dbReference type="GO" id="GO:0004359">
    <property type="term" value="F:glutaminase activity"/>
    <property type="evidence" value="ECO:0007669"/>
    <property type="project" value="UniProtKB-EC"/>
</dbReference>
<dbReference type="GO" id="GO:0000107">
    <property type="term" value="F:imidazoleglycerol-phosphate synthase activity"/>
    <property type="evidence" value="ECO:0000318"/>
    <property type="project" value="GO_Central"/>
</dbReference>
<dbReference type="GO" id="GO:0016829">
    <property type="term" value="F:lyase activity"/>
    <property type="evidence" value="ECO:0007669"/>
    <property type="project" value="UniProtKB-KW"/>
</dbReference>
<dbReference type="GO" id="GO:0000105">
    <property type="term" value="P:L-histidine biosynthetic process"/>
    <property type="evidence" value="ECO:0007669"/>
    <property type="project" value="UniProtKB-UniRule"/>
</dbReference>
<dbReference type="CDD" id="cd01748">
    <property type="entry name" value="GATase1_IGP_Synthase"/>
    <property type="match status" value="1"/>
</dbReference>
<dbReference type="FunFam" id="3.40.50.880:FF:000083">
    <property type="entry name" value="Imidazole glycerol phosphate synthase subunit HisH"/>
    <property type="match status" value="1"/>
</dbReference>
<dbReference type="Gene3D" id="3.40.50.880">
    <property type="match status" value="1"/>
</dbReference>
<dbReference type="HAMAP" id="MF_00278">
    <property type="entry name" value="HisH"/>
    <property type="match status" value="1"/>
</dbReference>
<dbReference type="InterPro" id="IPR029062">
    <property type="entry name" value="Class_I_gatase-like"/>
</dbReference>
<dbReference type="InterPro" id="IPR017926">
    <property type="entry name" value="GATASE"/>
</dbReference>
<dbReference type="InterPro" id="IPR010139">
    <property type="entry name" value="Imidazole-glycPsynth_HisH"/>
</dbReference>
<dbReference type="NCBIfam" id="TIGR01855">
    <property type="entry name" value="IMP_synth_hisH"/>
    <property type="match status" value="1"/>
</dbReference>
<dbReference type="NCBIfam" id="NF010608">
    <property type="entry name" value="PRK14004.1"/>
    <property type="match status" value="1"/>
</dbReference>
<dbReference type="PANTHER" id="PTHR42701">
    <property type="entry name" value="IMIDAZOLE GLYCEROL PHOSPHATE SYNTHASE SUBUNIT HISH"/>
    <property type="match status" value="1"/>
</dbReference>
<dbReference type="PANTHER" id="PTHR42701:SF1">
    <property type="entry name" value="IMIDAZOLE GLYCEROL PHOSPHATE SYNTHASE SUBUNIT HISH"/>
    <property type="match status" value="1"/>
</dbReference>
<dbReference type="Pfam" id="PF00117">
    <property type="entry name" value="GATase"/>
    <property type="match status" value="1"/>
</dbReference>
<dbReference type="PIRSF" id="PIRSF000495">
    <property type="entry name" value="Amidotransf_hisH"/>
    <property type="match status" value="1"/>
</dbReference>
<dbReference type="SUPFAM" id="SSF52317">
    <property type="entry name" value="Class I glutamine amidotransferase-like"/>
    <property type="match status" value="1"/>
</dbReference>
<dbReference type="PROSITE" id="PS51273">
    <property type="entry name" value="GATASE_TYPE_1"/>
    <property type="match status" value="1"/>
</dbReference>
<comment type="function">
    <text evidence="1">IGPS catalyzes the conversion of PRFAR and glutamine to IGP, AICAR and glutamate. The HisH subunit catalyzes the hydrolysis of glutamine to glutamate and ammonia as part of the synthesis of IGP and AICAR. The resulting ammonia molecule is channeled to the active site of HisF (By similarity).</text>
</comment>
<comment type="catalytic activity">
    <reaction>
        <text>5-[(5-phospho-1-deoxy-D-ribulos-1-ylimino)methylamino]-1-(5-phospho-beta-D-ribosyl)imidazole-4-carboxamide + L-glutamine = D-erythro-1-(imidazol-4-yl)glycerol 3-phosphate + 5-amino-1-(5-phospho-beta-D-ribosyl)imidazole-4-carboxamide + L-glutamate + H(+)</text>
        <dbReference type="Rhea" id="RHEA:24793"/>
        <dbReference type="ChEBI" id="CHEBI:15378"/>
        <dbReference type="ChEBI" id="CHEBI:29985"/>
        <dbReference type="ChEBI" id="CHEBI:58278"/>
        <dbReference type="ChEBI" id="CHEBI:58359"/>
        <dbReference type="ChEBI" id="CHEBI:58475"/>
        <dbReference type="ChEBI" id="CHEBI:58525"/>
        <dbReference type="EC" id="4.3.2.10"/>
    </reaction>
</comment>
<comment type="catalytic activity">
    <reaction>
        <text>L-glutamine + H2O = L-glutamate + NH4(+)</text>
        <dbReference type="Rhea" id="RHEA:15889"/>
        <dbReference type="ChEBI" id="CHEBI:15377"/>
        <dbReference type="ChEBI" id="CHEBI:28938"/>
        <dbReference type="ChEBI" id="CHEBI:29985"/>
        <dbReference type="ChEBI" id="CHEBI:58359"/>
        <dbReference type="EC" id="3.5.1.2"/>
    </reaction>
</comment>
<comment type="pathway">
    <text>Amino-acid biosynthesis; L-histidine biosynthesis; L-histidine from 5-phospho-alpha-D-ribose 1-diphosphate: step 5/9.</text>
</comment>
<comment type="subunit">
    <text evidence="1">Heterodimer of HisH and HisF.</text>
</comment>
<comment type="subcellular location">
    <subcellularLocation>
        <location evidence="1">Cytoplasm</location>
    </subcellularLocation>
</comment>
<feature type="chain" id="PRO_0000152387" description="Imidazole glycerol phosphate synthase subunit HisH">
    <location>
        <begin position="1"/>
        <end position="210"/>
    </location>
</feature>
<feature type="domain" description="Glutamine amidotransferase type-1">
    <location>
        <begin position="1"/>
        <end position="210"/>
    </location>
</feature>
<feature type="active site" description="Nucleophile" evidence="1">
    <location>
        <position position="79"/>
    </location>
</feature>
<feature type="active site" evidence="1">
    <location>
        <position position="191"/>
    </location>
</feature>
<feature type="active site" evidence="1">
    <location>
        <position position="193"/>
    </location>
</feature>
<gene>
    <name type="primary">hisH</name>
    <name type="ordered locus">LA_0125</name>
</gene>
<accession>P59118</accession>